<organism>
    <name type="scientific">Salmonella schwarzengrund (strain CVM19633)</name>
    <dbReference type="NCBI Taxonomy" id="439843"/>
    <lineage>
        <taxon>Bacteria</taxon>
        <taxon>Pseudomonadati</taxon>
        <taxon>Pseudomonadota</taxon>
        <taxon>Gammaproteobacteria</taxon>
        <taxon>Enterobacterales</taxon>
        <taxon>Enterobacteriaceae</taxon>
        <taxon>Salmonella</taxon>
    </lineage>
</organism>
<evidence type="ECO:0000255" key="1">
    <source>
        <dbReference type="HAMAP-Rule" id="MF_01345"/>
    </source>
</evidence>
<evidence type="ECO:0000305" key="2"/>
<protein>
    <recommendedName>
        <fullName evidence="1">Small ribosomal subunit protein uS17</fullName>
    </recommendedName>
    <alternativeName>
        <fullName evidence="2">30S ribosomal protein S17</fullName>
    </alternativeName>
</protein>
<feature type="chain" id="PRO_1000143301" description="Small ribosomal subunit protein uS17">
    <location>
        <begin position="1"/>
        <end position="84"/>
    </location>
</feature>
<dbReference type="EMBL" id="CP001127">
    <property type="protein sequence ID" value="ACF92151.1"/>
    <property type="molecule type" value="Genomic_DNA"/>
</dbReference>
<dbReference type="RefSeq" id="WP_000130101.1">
    <property type="nucleotide sequence ID" value="NC_011094.1"/>
</dbReference>
<dbReference type="SMR" id="B4TXD3"/>
<dbReference type="GeneID" id="66757766"/>
<dbReference type="KEGG" id="sew:SeSA_A3627"/>
<dbReference type="HOGENOM" id="CLU_073626_1_1_6"/>
<dbReference type="Proteomes" id="UP000001865">
    <property type="component" value="Chromosome"/>
</dbReference>
<dbReference type="GO" id="GO:0022627">
    <property type="term" value="C:cytosolic small ribosomal subunit"/>
    <property type="evidence" value="ECO:0007669"/>
    <property type="project" value="TreeGrafter"/>
</dbReference>
<dbReference type="GO" id="GO:0019843">
    <property type="term" value="F:rRNA binding"/>
    <property type="evidence" value="ECO:0007669"/>
    <property type="project" value="UniProtKB-UniRule"/>
</dbReference>
<dbReference type="GO" id="GO:0003735">
    <property type="term" value="F:structural constituent of ribosome"/>
    <property type="evidence" value="ECO:0007669"/>
    <property type="project" value="InterPro"/>
</dbReference>
<dbReference type="GO" id="GO:0006412">
    <property type="term" value="P:translation"/>
    <property type="evidence" value="ECO:0007669"/>
    <property type="project" value="UniProtKB-UniRule"/>
</dbReference>
<dbReference type="CDD" id="cd00364">
    <property type="entry name" value="Ribosomal_uS17"/>
    <property type="match status" value="1"/>
</dbReference>
<dbReference type="FunFam" id="2.40.50.140:FF:000014">
    <property type="entry name" value="30S ribosomal protein S17"/>
    <property type="match status" value="1"/>
</dbReference>
<dbReference type="Gene3D" id="2.40.50.140">
    <property type="entry name" value="Nucleic acid-binding proteins"/>
    <property type="match status" value="1"/>
</dbReference>
<dbReference type="HAMAP" id="MF_01345_B">
    <property type="entry name" value="Ribosomal_uS17_B"/>
    <property type="match status" value="1"/>
</dbReference>
<dbReference type="InterPro" id="IPR012340">
    <property type="entry name" value="NA-bd_OB-fold"/>
</dbReference>
<dbReference type="InterPro" id="IPR000266">
    <property type="entry name" value="Ribosomal_uS17"/>
</dbReference>
<dbReference type="InterPro" id="IPR019984">
    <property type="entry name" value="Ribosomal_uS17_bact/chlr"/>
</dbReference>
<dbReference type="InterPro" id="IPR019979">
    <property type="entry name" value="Ribosomal_uS17_CS"/>
</dbReference>
<dbReference type="NCBIfam" id="NF004123">
    <property type="entry name" value="PRK05610.1"/>
    <property type="match status" value="1"/>
</dbReference>
<dbReference type="NCBIfam" id="TIGR03635">
    <property type="entry name" value="uS17_bact"/>
    <property type="match status" value="1"/>
</dbReference>
<dbReference type="PANTHER" id="PTHR10744">
    <property type="entry name" value="40S RIBOSOMAL PROTEIN S11 FAMILY MEMBER"/>
    <property type="match status" value="1"/>
</dbReference>
<dbReference type="PANTHER" id="PTHR10744:SF1">
    <property type="entry name" value="SMALL RIBOSOMAL SUBUNIT PROTEIN US17M"/>
    <property type="match status" value="1"/>
</dbReference>
<dbReference type="Pfam" id="PF00366">
    <property type="entry name" value="Ribosomal_S17"/>
    <property type="match status" value="1"/>
</dbReference>
<dbReference type="PRINTS" id="PR00973">
    <property type="entry name" value="RIBOSOMALS17"/>
</dbReference>
<dbReference type="SUPFAM" id="SSF50249">
    <property type="entry name" value="Nucleic acid-binding proteins"/>
    <property type="match status" value="1"/>
</dbReference>
<dbReference type="PROSITE" id="PS00056">
    <property type="entry name" value="RIBOSOMAL_S17"/>
    <property type="match status" value="1"/>
</dbReference>
<proteinExistence type="inferred from homology"/>
<comment type="function">
    <text evidence="1">One of the primary rRNA binding proteins, it binds specifically to the 5'-end of 16S ribosomal RNA.</text>
</comment>
<comment type="subunit">
    <text evidence="1">Part of the 30S ribosomal subunit.</text>
</comment>
<comment type="similarity">
    <text evidence="1">Belongs to the universal ribosomal protein uS17 family.</text>
</comment>
<sequence>MTDKIRTLQGRVVSDKMEKSIVVAIERFVKHPIYGKFIKRTTKMHVHDENNECGIGDVVEIRECRPLSKTKSWTLVRVVEKAVL</sequence>
<gene>
    <name evidence="1" type="primary">rpsQ</name>
    <name type="ordered locus">SeSA_A3627</name>
</gene>
<name>RS17_SALSV</name>
<accession>B4TXD3</accession>
<keyword id="KW-0687">Ribonucleoprotein</keyword>
<keyword id="KW-0689">Ribosomal protein</keyword>
<keyword id="KW-0694">RNA-binding</keyword>
<keyword id="KW-0699">rRNA-binding</keyword>
<reference key="1">
    <citation type="journal article" date="2011" name="J. Bacteriol.">
        <title>Comparative genomics of 28 Salmonella enterica isolates: evidence for CRISPR-mediated adaptive sublineage evolution.</title>
        <authorList>
            <person name="Fricke W.F."/>
            <person name="Mammel M.K."/>
            <person name="McDermott P.F."/>
            <person name="Tartera C."/>
            <person name="White D.G."/>
            <person name="Leclerc J.E."/>
            <person name="Ravel J."/>
            <person name="Cebula T.A."/>
        </authorList>
    </citation>
    <scope>NUCLEOTIDE SEQUENCE [LARGE SCALE GENOMIC DNA]</scope>
    <source>
        <strain>CVM19633</strain>
    </source>
</reference>